<organism>
    <name type="scientific">Escherichia coli O127:H6 (strain E2348/69 / EPEC)</name>
    <dbReference type="NCBI Taxonomy" id="574521"/>
    <lineage>
        <taxon>Bacteria</taxon>
        <taxon>Pseudomonadati</taxon>
        <taxon>Pseudomonadota</taxon>
        <taxon>Gammaproteobacteria</taxon>
        <taxon>Enterobacterales</taxon>
        <taxon>Enterobacteriaceae</taxon>
        <taxon>Escherichia</taxon>
    </lineage>
</organism>
<proteinExistence type="inferred from homology"/>
<sequence>MYIYWILLGLAIATEITGTLSMKWASVSEGNGGFILMLVMISLSYIFLSFAVKKIALGVAYALWEGIGILFITLFSVLLFDESLSLMKIAGLTTLVAGIVLIKSGTRKVRKPELEVNHGAV</sequence>
<reference key="1">
    <citation type="journal article" date="2009" name="J. Bacteriol.">
        <title>Complete genome sequence and comparative genome analysis of enteropathogenic Escherichia coli O127:H6 strain E2348/69.</title>
        <authorList>
            <person name="Iguchi A."/>
            <person name="Thomson N.R."/>
            <person name="Ogura Y."/>
            <person name="Saunders D."/>
            <person name="Ooka T."/>
            <person name="Henderson I.R."/>
            <person name="Harris D."/>
            <person name="Asadulghani M."/>
            <person name="Kurokawa K."/>
            <person name="Dean P."/>
            <person name="Kenny B."/>
            <person name="Quail M.A."/>
            <person name="Thurston S."/>
            <person name="Dougan G."/>
            <person name="Hayashi T."/>
            <person name="Parkhill J."/>
            <person name="Frankel G."/>
        </authorList>
    </citation>
    <scope>NUCLEOTIDE SEQUENCE [LARGE SCALE GENOMIC DNA]</scope>
    <source>
        <strain>E2348/69 / EPEC</strain>
    </source>
</reference>
<keyword id="KW-0997">Cell inner membrane</keyword>
<keyword id="KW-1003">Cell membrane</keyword>
<keyword id="KW-0472">Membrane</keyword>
<keyword id="KW-1185">Reference proteome</keyword>
<keyword id="KW-0812">Transmembrane</keyword>
<keyword id="KW-1133">Transmembrane helix</keyword>
<keyword id="KW-0813">Transport</keyword>
<name>MDTJ_ECO27</name>
<comment type="function">
    <text evidence="1">Catalyzes the excretion of spermidine.</text>
</comment>
<comment type="subunit">
    <text evidence="1">Forms a complex with MdtI.</text>
</comment>
<comment type="subcellular location">
    <subcellularLocation>
        <location evidence="1">Cell inner membrane</location>
        <topology evidence="1">Multi-pass membrane protein</topology>
    </subcellularLocation>
</comment>
<comment type="similarity">
    <text evidence="1">Belongs to the drug/metabolite transporter (DMT) superfamily. Small multidrug resistance (SMR) (TC 2.A.7.1) family. MdtJ subfamily.</text>
</comment>
<accession>B7URU0</accession>
<protein>
    <recommendedName>
        <fullName evidence="1">Spermidine export protein MdtJ</fullName>
    </recommendedName>
</protein>
<gene>
    <name evidence="1" type="primary">mdtJ</name>
    <name type="ordered locus">E2348C_1685</name>
</gene>
<feature type="chain" id="PRO_1000185772" description="Spermidine export protein MdtJ">
    <location>
        <begin position="1"/>
        <end position="121"/>
    </location>
</feature>
<feature type="transmembrane region" description="Helical" evidence="1">
    <location>
        <begin position="1"/>
        <end position="21"/>
    </location>
</feature>
<feature type="transmembrane region" description="Helical" evidence="1">
    <location>
        <begin position="32"/>
        <end position="52"/>
    </location>
</feature>
<feature type="transmembrane region" description="Helical" evidence="1">
    <location>
        <begin position="55"/>
        <end position="75"/>
    </location>
</feature>
<feature type="transmembrane region" description="Helical" evidence="1">
    <location>
        <begin position="82"/>
        <end position="102"/>
    </location>
</feature>
<evidence type="ECO:0000255" key="1">
    <source>
        <dbReference type="HAMAP-Rule" id="MF_01598"/>
    </source>
</evidence>
<dbReference type="EMBL" id="FM180568">
    <property type="protein sequence ID" value="CAS09233.1"/>
    <property type="molecule type" value="Genomic_DNA"/>
</dbReference>
<dbReference type="RefSeq" id="WP_000276151.1">
    <property type="nucleotide sequence ID" value="NC_011601.1"/>
</dbReference>
<dbReference type="SMR" id="B7URU0"/>
<dbReference type="KEGG" id="ecg:E2348C_1685"/>
<dbReference type="HOGENOM" id="CLU_133067_0_0_6"/>
<dbReference type="Proteomes" id="UP000008205">
    <property type="component" value="Chromosome"/>
</dbReference>
<dbReference type="GO" id="GO:0005886">
    <property type="term" value="C:plasma membrane"/>
    <property type="evidence" value="ECO:0007669"/>
    <property type="project" value="UniProtKB-SubCell"/>
</dbReference>
<dbReference type="GO" id="GO:0015199">
    <property type="term" value="F:amino-acid betaine transmembrane transporter activity"/>
    <property type="evidence" value="ECO:0007669"/>
    <property type="project" value="TreeGrafter"/>
</dbReference>
<dbReference type="GO" id="GO:0015297">
    <property type="term" value="F:antiporter activity"/>
    <property type="evidence" value="ECO:0007669"/>
    <property type="project" value="TreeGrafter"/>
</dbReference>
<dbReference type="GO" id="GO:0015220">
    <property type="term" value="F:choline transmembrane transporter activity"/>
    <property type="evidence" value="ECO:0007669"/>
    <property type="project" value="TreeGrafter"/>
</dbReference>
<dbReference type="GO" id="GO:0015606">
    <property type="term" value="F:spermidine transmembrane transporter activity"/>
    <property type="evidence" value="ECO:0007669"/>
    <property type="project" value="UniProtKB-UniRule"/>
</dbReference>
<dbReference type="GO" id="GO:0031460">
    <property type="term" value="P:glycine betaine transport"/>
    <property type="evidence" value="ECO:0007669"/>
    <property type="project" value="TreeGrafter"/>
</dbReference>
<dbReference type="FunFam" id="1.10.3730.20:FF:000001">
    <property type="entry name" value="Quaternary ammonium compound resistance transporter SugE"/>
    <property type="match status" value="1"/>
</dbReference>
<dbReference type="Gene3D" id="1.10.3730.20">
    <property type="match status" value="1"/>
</dbReference>
<dbReference type="HAMAP" id="MF_01598">
    <property type="entry name" value="MdtJ"/>
    <property type="match status" value="1"/>
</dbReference>
<dbReference type="InterPro" id="IPR000390">
    <property type="entry name" value="Small_drug/metabolite_transptr"/>
</dbReference>
<dbReference type="InterPro" id="IPR045324">
    <property type="entry name" value="Small_multidrug_res"/>
</dbReference>
<dbReference type="InterPro" id="IPR023740">
    <property type="entry name" value="Spermidine_export_MdtJ"/>
</dbReference>
<dbReference type="NCBIfam" id="NF007767">
    <property type="entry name" value="PRK10452.1"/>
    <property type="match status" value="1"/>
</dbReference>
<dbReference type="PANTHER" id="PTHR30561">
    <property type="entry name" value="SMR FAMILY PROTON-DEPENDENT DRUG EFFLUX TRANSPORTER SUGE"/>
    <property type="match status" value="1"/>
</dbReference>
<dbReference type="PANTHER" id="PTHR30561:SF2">
    <property type="entry name" value="SPERMIDINE EXPORT PROTEIN MDTJ"/>
    <property type="match status" value="1"/>
</dbReference>
<dbReference type="Pfam" id="PF00893">
    <property type="entry name" value="Multi_Drug_Res"/>
    <property type="match status" value="1"/>
</dbReference>
<dbReference type="SUPFAM" id="SSF103481">
    <property type="entry name" value="Multidrug resistance efflux transporter EmrE"/>
    <property type="match status" value="1"/>
</dbReference>